<feature type="chain" id="PRO_1000063987" description="2,3-bisphosphoglycerate-independent phosphoglycerate mutase">
    <location>
        <begin position="1"/>
        <end position="515"/>
    </location>
</feature>
<feature type="active site" description="Phosphoserine intermediate" evidence="1">
    <location>
        <position position="64"/>
    </location>
</feature>
<feature type="binding site" evidence="1">
    <location>
        <position position="14"/>
    </location>
    <ligand>
        <name>Mn(2+)</name>
        <dbReference type="ChEBI" id="CHEBI:29035"/>
        <label>2</label>
    </ligand>
</feature>
<feature type="binding site" evidence="1">
    <location>
        <position position="64"/>
    </location>
    <ligand>
        <name>Mn(2+)</name>
        <dbReference type="ChEBI" id="CHEBI:29035"/>
        <label>2</label>
    </ligand>
</feature>
<feature type="binding site" evidence="1">
    <location>
        <position position="125"/>
    </location>
    <ligand>
        <name>substrate</name>
    </ligand>
</feature>
<feature type="binding site" evidence="1">
    <location>
        <begin position="155"/>
        <end position="156"/>
    </location>
    <ligand>
        <name>substrate</name>
    </ligand>
</feature>
<feature type="binding site" evidence="1">
    <location>
        <position position="187"/>
    </location>
    <ligand>
        <name>substrate</name>
    </ligand>
</feature>
<feature type="binding site" evidence="1">
    <location>
        <position position="193"/>
    </location>
    <ligand>
        <name>substrate</name>
    </ligand>
</feature>
<feature type="binding site" evidence="1">
    <location>
        <begin position="263"/>
        <end position="266"/>
    </location>
    <ligand>
        <name>substrate</name>
    </ligand>
</feature>
<feature type="binding site" evidence="1">
    <location>
        <position position="337"/>
    </location>
    <ligand>
        <name>substrate</name>
    </ligand>
</feature>
<feature type="binding site" evidence="1">
    <location>
        <position position="404"/>
    </location>
    <ligand>
        <name>Mn(2+)</name>
        <dbReference type="ChEBI" id="CHEBI:29035"/>
        <label>1</label>
    </ligand>
</feature>
<feature type="binding site" evidence="1">
    <location>
        <position position="408"/>
    </location>
    <ligand>
        <name>Mn(2+)</name>
        <dbReference type="ChEBI" id="CHEBI:29035"/>
        <label>1</label>
    </ligand>
</feature>
<feature type="binding site" evidence="1">
    <location>
        <position position="445"/>
    </location>
    <ligand>
        <name>Mn(2+)</name>
        <dbReference type="ChEBI" id="CHEBI:29035"/>
        <label>2</label>
    </ligand>
</feature>
<feature type="binding site" evidence="1">
    <location>
        <position position="446"/>
    </location>
    <ligand>
        <name>Mn(2+)</name>
        <dbReference type="ChEBI" id="CHEBI:29035"/>
        <label>2</label>
    </ligand>
</feature>
<feature type="binding site" evidence="1">
    <location>
        <position position="464"/>
    </location>
    <ligand>
        <name>Mn(2+)</name>
        <dbReference type="ChEBI" id="CHEBI:29035"/>
        <label>1</label>
    </ligand>
</feature>
<sequence length="515" mass="55603">MTATPKPLVLIILDGFGHSESPDYNAIYAAKKPVWDRLLATQPHGLISGSGMDVGLPDGQMGNSEVGHMNLGAGRVVYQDFTRVTKAIRDGEFFDNPVIASAVDKAVAADKAVHILGLLSPGGVHSHEDHLVAMAQMAARRGAGKIYLHAFLDGRDTPPKSAQPSLERLDATFAGLGKGRIASIIGRYFAMDRDNRWDRVQAAYELIVDGKAEFTADSSVAALEAAYARGESDEFVKATAVVPAGAEAVRVEDGDAVIFMNFRADRARELSRAFVEPAFGEFPRQRAAQLAGFVMLTQYAASIPAPCAFPPEPLTNVLGEYLAKHGKTQLRIAETEKYAHVTFFFSGGREEPYEGEERILIPSPKVATYDLQPEMSAPEVTDRIVEAIEQQRYDVIVVNYANGDMVGHTGVFEAAVKAVECLDTCMGRIVEALDKVGGEALITADHGNVEQMEDESTGQAHTAHTCEPVPFVYVGKRKLSIREGGVLADVAPTMLTLMGLEQPAEMTGRSIVILD</sequence>
<organism>
    <name type="scientific">Pseudomonas paraeruginosa (strain DSM 24068 / PA7)</name>
    <name type="common">Pseudomonas aeruginosa (strain PA7)</name>
    <dbReference type="NCBI Taxonomy" id="381754"/>
    <lineage>
        <taxon>Bacteria</taxon>
        <taxon>Pseudomonadati</taxon>
        <taxon>Pseudomonadota</taxon>
        <taxon>Gammaproteobacteria</taxon>
        <taxon>Pseudomonadales</taxon>
        <taxon>Pseudomonadaceae</taxon>
        <taxon>Pseudomonas</taxon>
        <taxon>Pseudomonas paraeruginosa</taxon>
    </lineage>
</organism>
<comment type="function">
    <text evidence="1">Catalyzes the interconversion of 2-phosphoglycerate and 3-phosphoglycerate.</text>
</comment>
<comment type="catalytic activity">
    <reaction evidence="1">
        <text>(2R)-2-phosphoglycerate = (2R)-3-phosphoglycerate</text>
        <dbReference type="Rhea" id="RHEA:15901"/>
        <dbReference type="ChEBI" id="CHEBI:58272"/>
        <dbReference type="ChEBI" id="CHEBI:58289"/>
        <dbReference type="EC" id="5.4.2.12"/>
    </reaction>
</comment>
<comment type="cofactor">
    <cofactor evidence="1">
        <name>Mn(2+)</name>
        <dbReference type="ChEBI" id="CHEBI:29035"/>
    </cofactor>
    <text evidence="1">Binds 2 manganese ions per subunit.</text>
</comment>
<comment type="pathway">
    <text evidence="1">Carbohydrate degradation; glycolysis; pyruvate from D-glyceraldehyde 3-phosphate: step 3/5.</text>
</comment>
<comment type="subunit">
    <text evidence="1">Monomer.</text>
</comment>
<comment type="similarity">
    <text evidence="1">Belongs to the BPG-independent phosphoglycerate mutase family.</text>
</comment>
<name>GPMI_PSEP7</name>
<evidence type="ECO:0000255" key="1">
    <source>
        <dbReference type="HAMAP-Rule" id="MF_01038"/>
    </source>
</evidence>
<accession>A6VDP9</accession>
<gene>
    <name evidence="1" type="primary">gpmI</name>
    <name type="ordered locus">PSPA7_5865</name>
</gene>
<proteinExistence type="inferred from homology"/>
<keyword id="KW-0324">Glycolysis</keyword>
<keyword id="KW-0413">Isomerase</keyword>
<keyword id="KW-0464">Manganese</keyword>
<keyword id="KW-0479">Metal-binding</keyword>
<reference key="1">
    <citation type="submission" date="2007-06" db="EMBL/GenBank/DDBJ databases">
        <authorList>
            <person name="Dodson R.J."/>
            <person name="Harkins D."/>
            <person name="Paulsen I.T."/>
        </authorList>
    </citation>
    <scope>NUCLEOTIDE SEQUENCE [LARGE SCALE GENOMIC DNA]</scope>
    <source>
        <strain>DSM 24068 / PA7</strain>
    </source>
</reference>
<dbReference type="EC" id="5.4.2.12" evidence="1"/>
<dbReference type="EMBL" id="CP000744">
    <property type="protein sequence ID" value="ABR85258.1"/>
    <property type="molecule type" value="Genomic_DNA"/>
</dbReference>
<dbReference type="RefSeq" id="WP_003155548.1">
    <property type="nucleotide sequence ID" value="NC_009656.1"/>
</dbReference>
<dbReference type="SMR" id="A6VDP9"/>
<dbReference type="KEGG" id="pap:PSPA7_5865"/>
<dbReference type="HOGENOM" id="CLU_026099_2_0_6"/>
<dbReference type="UniPathway" id="UPA00109">
    <property type="reaction ID" value="UER00186"/>
</dbReference>
<dbReference type="Proteomes" id="UP000001582">
    <property type="component" value="Chromosome"/>
</dbReference>
<dbReference type="GO" id="GO:0005829">
    <property type="term" value="C:cytosol"/>
    <property type="evidence" value="ECO:0007669"/>
    <property type="project" value="TreeGrafter"/>
</dbReference>
<dbReference type="GO" id="GO:0030145">
    <property type="term" value="F:manganese ion binding"/>
    <property type="evidence" value="ECO:0007669"/>
    <property type="project" value="UniProtKB-UniRule"/>
</dbReference>
<dbReference type="GO" id="GO:0004619">
    <property type="term" value="F:phosphoglycerate mutase activity"/>
    <property type="evidence" value="ECO:0007669"/>
    <property type="project" value="UniProtKB-EC"/>
</dbReference>
<dbReference type="GO" id="GO:0006007">
    <property type="term" value="P:glucose catabolic process"/>
    <property type="evidence" value="ECO:0007669"/>
    <property type="project" value="InterPro"/>
</dbReference>
<dbReference type="GO" id="GO:0006096">
    <property type="term" value="P:glycolytic process"/>
    <property type="evidence" value="ECO:0007669"/>
    <property type="project" value="UniProtKB-UniRule"/>
</dbReference>
<dbReference type="CDD" id="cd16010">
    <property type="entry name" value="iPGM"/>
    <property type="match status" value="1"/>
</dbReference>
<dbReference type="FunFam" id="3.40.1450.10:FF:000001">
    <property type="entry name" value="2,3-bisphosphoglycerate-independent phosphoglycerate mutase"/>
    <property type="match status" value="1"/>
</dbReference>
<dbReference type="FunFam" id="3.40.720.10:FF:000001">
    <property type="entry name" value="2,3-bisphosphoglycerate-independent phosphoglycerate mutase"/>
    <property type="match status" value="1"/>
</dbReference>
<dbReference type="Gene3D" id="3.40.720.10">
    <property type="entry name" value="Alkaline Phosphatase, subunit A"/>
    <property type="match status" value="1"/>
</dbReference>
<dbReference type="Gene3D" id="3.40.1450.10">
    <property type="entry name" value="BPG-independent phosphoglycerate mutase, domain B"/>
    <property type="match status" value="1"/>
</dbReference>
<dbReference type="HAMAP" id="MF_01038">
    <property type="entry name" value="GpmI"/>
    <property type="match status" value="1"/>
</dbReference>
<dbReference type="InterPro" id="IPR017850">
    <property type="entry name" value="Alkaline_phosphatase_core_sf"/>
</dbReference>
<dbReference type="InterPro" id="IPR011258">
    <property type="entry name" value="BPG-indep_PGM_N"/>
</dbReference>
<dbReference type="InterPro" id="IPR006124">
    <property type="entry name" value="Metalloenzyme"/>
</dbReference>
<dbReference type="InterPro" id="IPR036646">
    <property type="entry name" value="PGAM_B_sf"/>
</dbReference>
<dbReference type="InterPro" id="IPR005995">
    <property type="entry name" value="Pgm_bpd_ind"/>
</dbReference>
<dbReference type="NCBIfam" id="TIGR01307">
    <property type="entry name" value="pgm_bpd_ind"/>
    <property type="match status" value="1"/>
</dbReference>
<dbReference type="PANTHER" id="PTHR31637">
    <property type="entry name" value="2,3-BISPHOSPHOGLYCERATE-INDEPENDENT PHOSPHOGLYCERATE MUTASE"/>
    <property type="match status" value="1"/>
</dbReference>
<dbReference type="PANTHER" id="PTHR31637:SF0">
    <property type="entry name" value="2,3-BISPHOSPHOGLYCERATE-INDEPENDENT PHOSPHOGLYCERATE MUTASE"/>
    <property type="match status" value="1"/>
</dbReference>
<dbReference type="Pfam" id="PF06415">
    <property type="entry name" value="iPGM_N"/>
    <property type="match status" value="1"/>
</dbReference>
<dbReference type="Pfam" id="PF01676">
    <property type="entry name" value="Metalloenzyme"/>
    <property type="match status" value="1"/>
</dbReference>
<dbReference type="PIRSF" id="PIRSF001492">
    <property type="entry name" value="IPGAM"/>
    <property type="match status" value="1"/>
</dbReference>
<dbReference type="SUPFAM" id="SSF64158">
    <property type="entry name" value="2,3-Bisphosphoglycerate-independent phosphoglycerate mutase, substrate-binding domain"/>
    <property type="match status" value="1"/>
</dbReference>
<dbReference type="SUPFAM" id="SSF53649">
    <property type="entry name" value="Alkaline phosphatase-like"/>
    <property type="match status" value="1"/>
</dbReference>
<protein>
    <recommendedName>
        <fullName evidence="1">2,3-bisphosphoglycerate-independent phosphoglycerate mutase</fullName>
        <shortName evidence="1">BPG-independent PGAM</shortName>
        <shortName evidence="1">Phosphoglyceromutase</shortName>
        <shortName evidence="1">iPGM</shortName>
        <ecNumber evidence="1">5.4.2.12</ecNumber>
    </recommendedName>
</protein>